<protein>
    <recommendedName>
        <fullName>Hemoglobin subunit beta-1</fullName>
    </recommendedName>
    <alternativeName>
        <fullName>Beta-1-globin</fullName>
    </alternativeName>
    <alternativeName>
        <fullName>Hemoglobin beta-1 chain</fullName>
    </alternativeName>
    <alternativeName>
        <fullName>Hemoglobin beta-I chain</fullName>
    </alternativeName>
</protein>
<organism>
    <name type="scientific">Drymarchon melanurus erebennus</name>
    <name type="common">Texas indigo snake</name>
    <name type="synonym">Drymarchon corais erebennus</name>
    <dbReference type="NCBI Taxonomy" id="358746"/>
    <lineage>
        <taxon>Eukaryota</taxon>
        <taxon>Metazoa</taxon>
        <taxon>Chordata</taxon>
        <taxon>Craniata</taxon>
        <taxon>Vertebrata</taxon>
        <taxon>Euteleostomi</taxon>
        <taxon>Lepidosauria</taxon>
        <taxon>Squamata</taxon>
        <taxon>Bifurcata</taxon>
        <taxon>Unidentata</taxon>
        <taxon>Episquamata</taxon>
        <taxon>Toxicofera</taxon>
        <taxon>Serpentes</taxon>
        <taxon>Colubroidea</taxon>
        <taxon>Colubridae</taxon>
        <taxon>Colubrinae</taxon>
        <taxon>Drymarchon</taxon>
    </lineage>
</organism>
<feature type="chain" id="PRO_0000052949" description="Hemoglobin subunit beta-1">
    <location>
        <begin position="1"/>
        <end position="146"/>
    </location>
</feature>
<feature type="domain" description="Globin" evidence="1">
    <location>
        <begin position="2"/>
        <end position="146"/>
    </location>
</feature>
<feature type="binding site" description="distal binding residue" evidence="1">
    <location>
        <position position="63"/>
    </location>
    <ligand>
        <name>heme b</name>
        <dbReference type="ChEBI" id="CHEBI:60344"/>
    </ligand>
    <ligandPart>
        <name>Fe</name>
        <dbReference type="ChEBI" id="CHEBI:18248"/>
    </ligandPart>
</feature>
<feature type="binding site" description="proximal binding residue" evidence="1">
    <location>
        <position position="92"/>
    </location>
    <ligand>
        <name>heme b</name>
        <dbReference type="ChEBI" id="CHEBI:60344"/>
    </ligand>
    <ligandPart>
        <name>Fe</name>
        <dbReference type="ChEBI" id="CHEBI:18248"/>
    </ligandPart>
</feature>
<keyword id="KW-0903">Direct protein sequencing</keyword>
<keyword id="KW-0349">Heme</keyword>
<keyword id="KW-0408">Iron</keyword>
<keyword id="KW-0479">Metal-binding</keyword>
<keyword id="KW-0561">Oxygen transport</keyword>
<keyword id="KW-0813">Transport</keyword>
<proteinExistence type="evidence at protein level"/>
<comment type="function">
    <text>Involved in oxygen transport from the lung to the various peripheral tissues.</text>
</comment>
<comment type="subunit">
    <text>Heterotetramer of two alpha chains and two beta chains.</text>
</comment>
<comment type="tissue specificity">
    <text>Red blood cells.</text>
</comment>
<comment type="similarity">
    <text evidence="1">Belongs to the globin family.</text>
</comment>
<sequence>VHWTAEEKSAITSIWNKVDVPAVGSEALSRLLIVYPWTQRFFTSFGNLSNAAAIQSNAQVKAHGKKVFTAFGDAVKNPEAVKETFAKLSELHCDKLHVDPINFKLLGQILITVLAAHFGKEFTPHVQASYQKLVSVVAHALAHRYH</sequence>
<accession>P0C0U8</accession>
<evidence type="ECO:0000255" key="1">
    <source>
        <dbReference type="PROSITE-ProRule" id="PRU00238"/>
    </source>
</evidence>
<name>HBB1_DRYME</name>
<dbReference type="SMR" id="P0C0U8"/>
<dbReference type="GO" id="GO:0072562">
    <property type="term" value="C:blood microparticle"/>
    <property type="evidence" value="ECO:0007669"/>
    <property type="project" value="TreeGrafter"/>
</dbReference>
<dbReference type="GO" id="GO:0031838">
    <property type="term" value="C:haptoglobin-hemoglobin complex"/>
    <property type="evidence" value="ECO:0007669"/>
    <property type="project" value="TreeGrafter"/>
</dbReference>
<dbReference type="GO" id="GO:0005833">
    <property type="term" value="C:hemoglobin complex"/>
    <property type="evidence" value="ECO:0007669"/>
    <property type="project" value="InterPro"/>
</dbReference>
<dbReference type="GO" id="GO:0031720">
    <property type="term" value="F:haptoglobin binding"/>
    <property type="evidence" value="ECO:0007669"/>
    <property type="project" value="TreeGrafter"/>
</dbReference>
<dbReference type="GO" id="GO:0020037">
    <property type="term" value="F:heme binding"/>
    <property type="evidence" value="ECO:0007669"/>
    <property type="project" value="InterPro"/>
</dbReference>
<dbReference type="GO" id="GO:0046872">
    <property type="term" value="F:metal ion binding"/>
    <property type="evidence" value="ECO:0007669"/>
    <property type="project" value="UniProtKB-KW"/>
</dbReference>
<dbReference type="GO" id="GO:0043177">
    <property type="term" value="F:organic acid binding"/>
    <property type="evidence" value="ECO:0007669"/>
    <property type="project" value="TreeGrafter"/>
</dbReference>
<dbReference type="GO" id="GO:0019825">
    <property type="term" value="F:oxygen binding"/>
    <property type="evidence" value="ECO:0007669"/>
    <property type="project" value="InterPro"/>
</dbReference>
<dbReference type="GO" id="GO:0005344">
    <property type="term" value="F:oxygen carrier activity"/>
    <property type="evidence" value="ECO:0007669"/>
    <property type="project" value="UniProtKB-KW"/>
</dbReference>
<dbReference type="GO" id="GO:0004601">
    <property type="term" value="F:peroxidase activity"/>
    <property type="evidence" value="ECO:0007669"/>
    <property type="project" value="TreeGrafter"/>
</dbReference>
<dbReference type="GO" id="GO:0042744">
    <property type="term" value="P:hydrogen peroxide catabolic process"/>
    <property type="evidence" value="ECO:0007669"/>
    <property type="project" value="TreeGrafter"/>
</dbReference>
<dbReference type="CDD" id="cd08925">
    <property type="entry name" value="Hb-beta-like"/>
    <property type="match status" value="1"/>
</dbReference>
<dbReference type="FunFam" id="1.10.490.10:FF:000001">
    <property type="entry name" value="Hemoglobin subunit beta"/>
    <property type="match status" value="1"/>
</dbReference>
<dbReference type="Gene3D" id="1.10.490.10">
    <property type="entry name" value="Globins"/>
    <property type="match status" value="1"/>
</dbReference>
<dbReference type="InterPro" id="IPR000971">
    <property type="entry name" value="Globin"/>
</dbReference>
<dbReference type="InterPro" id="IPR009050">
    <property type="entry name" value="Globin-like_sf"/>
</dbReference>
<dbReference type="InterPro" id="IPR012292">
    <property type="entry name" value="Globin/Proto"/>
</dbReference>
<dbReference type="InterPro" id="IPR002337">
    <property type="entry name" value="Hemoglobin_b"/>
</dbReference>
<dbReference type="InterPro" id="IPR050056">
    <property type="entry name" value="Hemoglobin_oxygen_transport"/>
</dbReference>
<dbReference type="PANTHER" id="PTHR11442">
    <property type="entry name" value="HEMOGLOBIN FAMILY MEMBER"/>
    <property type="match status" value="1"/>
</dbReference>
<dbReference type="PANTHER" id="PTHR11442:SF7">
    <property type="entry name" value="HEMOGLOBIN SUBUNIT EPSILON"/>
    <property type="match status" value="1"/>
</dbReference>
<dbReference type="Pfam" id="PF00042">
    <property type="entry name" value="Globin"/>
    <property type="match status" value="1"/>
</dbReference>
<dbReference type="PRINTS" id="PR00814">
    <property type="entry name" value="BETAHAEM"/>
</dbReference>
<dbReference type="SUPFAM" id="SSF46458">
    <property type="entry name" value="Globin-like"/>
    <property type="match status" value="1"/>
</dbReference>
<dbReference type="PROSITE" id="PS01033">
    <property type="entry name" value="GLOBIN"/>
    <property type="match status" value="1"/>
</dbReference>
<reference key="1">
    <citation type="journal article" date="2002" name="Biol. Chem.">
        <title>The primary structure of three hemoglobin chains from the indigo snake (Drymarchon corais erebennus, Serpentes): first evidence for alphaD chains and two beta chain types in snakes.</title>
        <authorList>
            <person name="Stoeckelhuber M."/>
            <person name="Gorr T."/>
            <person name="Kleinschmidt T."/>
        </authorList>
    </citation>
    <scope>PROTEIN SEQUENCE</scope>
</reference>